<name>KDPA_BRADU</name>
<reference key="1">
    <citation type="journal article" date="2002" name="DNA Res.">
        <title>Complete genomic sequence of nitrogen-fixing symbiotic bacterium Bradyrhizobium japonicum USDA110.</title>
        <authorList>
            <person name="Kaneko T."/>
            <person name="Nakamura Y."/>
            <person name="Sato S."/>
            <person name="Minamisawa K."/>
            <person name="Uchiumi T."/>
            <person name="Sasamoto S."/>
            <person name="Watanabe A."/>
            <person name="Idesawa K."/>
            <person name="Iriguchi M."/>
            <person name="Kawashima K."/>
            <person name="Kohara M."/>
            <person name="Matsumoto M."/>
            <person name="Shimpo S."/>
            <person name="Tsuruoka H."/>
            <person name="Wada T."/>
            <person name="Yamada M."/>
            <person name="Tabata S."/>
        </authorList>
    </citation>
    <scope>NUCLEOTIDE SEQUENCE [LARGE SCALE GENOMIC DNA]</scope>
    <source>
        <strain>JCM 10833 / BCRC 13528 / IAM 13628 / NBRC 14792 / USDA 110</strain>
    </source>
</reference>
<protein>
    <recommendedName>
        <fullName evidence="1">Potassium-transporting ATPase potassium-binding subunit</fullName>
    </recommendedName>
    <alternativeName>
        <fullName evidence="1">ATP phosphohydrolase [potassium-transporting] A chain</fullName>
    </alternativeName>
    <alternativeName>
        <fullName evidence="1">Potassium-binding and translocating subunit A</fullName>
    </alternativeName>
    <alternativeName>
        <fullName evidence="1">Potassium-translocating ATPase A chain</fullName>
    </alternativeName>
</protein>
<feature type="chain" id="PRO_0000166486" description="Potassium-transporting ATPase potassium-binding subunit">
    <location>
        <begin position="1"/>
        <end position="567"/>
    </location>
</feature>
<feature type="transmembrane region" description="Helical" evidence="1">
    <location>
        <begin position="3"/>
        <end position="23"/>
    </location>
</feature>
<feature type="transmembrane region" description="Helical" evidence="1">
    <location>
        <begin position="64"/>
        <end position="84"/>
    </location>
</feature>
<feature type="transmembrane region" description="Helical" evidence="1">
    <location>
        <begin position="136"/>
        <end position="156"/>
    </location>
</feature>
<feature type="transmembrane region" description="Helical" evidence="1">
    <location>
        <begin position="179"/>
        <end position="199"/>
    </location>
</feature>
<feature type="transmembrane region" description="Helical" evidence="1">
    <location>
        <begin position="220"/>
        <end position="240"/>
    </location>
</feature>
<feature type="transmembrane region" description="Helical" evidence="1">
    <location>
        <begin position="254"/>
        <end position="274"/>
    </location>
</feature>
<feature type="transmembrane region" description="Helical" evidence="1">
    <location>
        <begin position="285"/>
        <end position="305"/>
    </location>
</feature>
<feature type="transmembrane region" description="Helical" evidence="1">
    <location>
        <begin position="330"/>
        <end position="350"/>
    </location>
</feature>
<feature type="transmembrane region" description="Helical" evidence="1">
    <location>
        <begin position="374"/>
        <end position="394"/>
    </location>
</feature>
<feature type="transmembrane region" description="Helical" evidence="1">
    <location>
        <begin position="420"/>
        <end position="440"/>
    </location>
</feature>
<feature type="transmembrane region" description="Helical" evidence="1">
    <location>
        <begin position="488"/>
        <end position="508"/>
    </location>
</feature>
<feature type="transmembrane region" description="Helical" evidence="1">
    <location>
        <begin position="527"/>
        <end position="547"/>
    </location>
</feature>
<keyword id="KW-0997">Cell inner membrane</keyword>
<keyword id="KW-1003">Cell membrane</keyword>
<keyword id="KW-0406">Ion transport</keyword>
<keyword id="KW-0472">Membrane</keyword>
<keyword id="KW-0630">Potassium</keyword>
<keyword id="KW-0633">Potassium transport</keyword>
<keyword id="KW-1185">Reference proteome</keyword>
<keyword id="KW-0812">Transmembrane</keyword>
<keyword id="KW-1133">Transmembrane helix</keyword>
<keyword id="KW-0813">Transport</keyword>
<gene>
    <name evidence="1" type="primary">kdpA</name>
    <name type="ordered locus">bll6779</name>
</gene>
<evidence type="ECO:0000255" key="1">
    <source>
        <dbReference type="HAMAP-Rule" id="MF_00275"/>
    </source>
</evidence>
<accession>Q89FC2</accession>
<sequence>MTMIGWLQIILFCVIIVALTKPLGWYMTRVFNGERTFLSPVLRPIEAGIYWISGVDERREQHWLTYTVAMLLFHVGGFLVIYGVMRLQAVLPFNPAGQSAVAQDLSFNTAISFITNTNWQNYGGESTLSYLVQMLGLTHQNFLSAATGIALAMALIRGFSRASVRTVGNFWVDVTRCTLYVLLPICVVYTLFLVWQGIPQTLGDYVEATTLEGAKQTIAVGPVASQVAIKMLGTNGGGFFNANAAHPFENPTALSNFVQMLSIFALGAALTNVFGRMVGNQRQGWAILAVMGVLFVAGVAVTYWAEANGTSTMHALGLTGGNMEGKEVRFGLVASSLFAVITTAASCGAVNAMHDSFTALGGMIPLINMQLGEIIVGGVGAGLYGMLLFVVLAIFVAGLMVGRTPEYVGKKIEAREVKMAMLAILVLPLMYLGWTAVGVVYPAAVASMANAGPHGFTEVLYAFTSATGNNGSAFAGLTGNTLFYNLTLASAMFVGRFFMIVPAMAIAGSLAAKKSIPPSAGTFPTTGGLFVGLVVGVILIIGGLTFFPALALGPIVEHLAMNAGQVF</sequence>
<organism>
    <name type="scientific">Bradyrhizobium diazoefficiens (strain JCM 10833 / BCRC 13528 / IAM 13628 / NBRC 14792 / USDA 110)</name>
    <dbReference type="NCBI Taxonomy" id="224911"/>
    <lineage>
        <taxon>Bacteria</taxon>
        <taxon>Pseudomonadati</taxon>
        <taxon>Pseudomonadota</taxon>
        <taxon>Alphaproteobacteria</taxon>
        <taxon>Hyphomicrobiales</taxon>
        <taxon>Nitrobacteraceae</taxon>
        <taxon>Bradyrhizobium</taxon>
    </lineage>
</organism>
<dbReference type="EMBL" id="BA000040">
    <property type="protein sequence ID" value="BAC52044.1"/>
    <property type="molecule type" value="Genomic_DNA"/>
</dbReference>
<dbReference type="RefSeq" id="NP_773419.1">
    <property type="nucleotide sequence ID" value="NC_004463.1"/>
</dbReference>
<dbReference type="RefSeq" id="WP_011089518.1">
    <property type="nucleotide sequence ID" value="NC_004463.1"/>
</dbReference>
<dbReference type="SMR" id="Q89FC2"/>
<dbReference type="FunCoup" id="Q89FC2">
    <property type="interactions" value="325"/>
</dbReference>
<dbReference type="STRING" id="224911.AAV28_31495"/>
<dbReference type="EnsemblBacteria" id="BAC52044">
    <property type="protein sequence ID" value="BAC52044"/>
    <property type="gene ID" value="BAC52044"/>
</dbReference>
<dbReference type="GeneID" id="46493753"/>
<dbReference type="KEGG" id="bja:bll6779"/>
<dbReference type="PATRIC" id="fig|224911.44.peg.6802"/>
<dbReference type="eggNOG" id="COG2060">
    <property type="taxonomic scope" value="Bacteria"/>
</dbReference>
<dbReference type="HOGENOM" id="CLU_018614_3_0_5"/>
<dbReference type="InParanoid" id="Q89FC2"/>
<dbReference type="OrthoDB" id="9763796at2"/>
<dbReference type="PhylomeDB" id="Q89FC2"/>
<dbReference type="Proteomes" id="UP000002526">
    <property type="component" value="Chromosome"/>
</dbReference>
<dbReference type="GO" id="GO:0005886">
    <property type="term" value="C:plasma membrane"/>
    <property type="evidence" value="ECO:0000318"/>
    <property type="project" value="GO_Central"/>
</dbReference>
<dbReference type="GO" id="GO:0008556">
    <property type="term" value="F:P-type potassium transmembrane transporter activity"/>
    <property type="evidence" value="ECO:0000318"/>
    <property type="project" value="GO_Central"/>
</dbReference>
<dbReference type="GO" id="GO:0030955">
    <property type="term" value="F:potassium ion binding"/>
    <property type="evidence" value="ECO:0007669"/>
    <property type="project" value="UniProtKB-UniRule"/>
</dbReference>
<dbReference type="GO" id="GO:0071805">
    <property type="term" value="P:potassium ion transmembrane transport"/>
    <property type="evidence" value="ECO:0000318"/>
    <property type="project" value="GO_Central"/>
</dbReference>
<dbReference type="HAMAP" id="MF_00275">
    <property type="entry name" value="KdpA"/>
    <property type="match status" value="1"/>
</dbReference>
<dbReference type="InterPro" id="IPR004623">
    <property type="entry name" value="KdpA"/>
</dbReference>
<dbReference type="NCBIfam" id="TIGR00680">
    <property type="entry name" value="kdpA"/>
    <property type="match status" value="1"/>
</dbReference>
<dbReference type="PANTHER" id="PTHR30607">
    <property type="entry name" value="POTASSIUM-TRANSPORTING ATPASE A CHAIN"/>
    <property type="match status" value="1"/>
</dbReference>
<dbReference type="PANTHER" id="PTHR30607:SF2">
    <property type="entry name" value="POTASSIUM-TRANSPORTING ATPASE POTASSIUM-BINDING SUBUNIT"/>
    <property type="match status" value="1"/>
</dbReference>
<dbReference type="Pfam" id="PF03814">
    <property type="entry name" value="KdpA"/>
    <property type="match status" value="1"/>
</dbReference>
<dbReference type="PIRSF" id="PIRSF001294">
    <property type="entry name" value="K_ATPaseA"/>
    <property type="match status" value="1"/>
</dbReference>
<comment type="function">
    <text evidence="1">Part of the high-affinity ATP-driven potassium transport (or Kdp) system, which catalyzes the hydrolysis of ATP coupled with the electrogenic transport of potassium into the cytoplasm. This subunit binds the periplasmic potassium ions and delivers the ions to the membrane domain of KdpB through an intramembrane tunnel.</text>
</comment>
<comment type="subunit">
    <text evidence="1">The system is composed of three essential subunits: KdpA, KdpB and KdpC.</text>
</comment>
<comment type="subcellular location">
    <subcellularLocation>
        <location evidence="1">Cell inner membrane</location>
        <topology evidence="1">Multi-pass membrane protein</topology>
    </subcellularLocation>
</comment>
<comment type="similarity">
    <text evidence="1">Belongs to the KdpA family.</text>
</comment>
<proteinExistence type="inferred from homology"/>